<evidence type="ECO:0000255" key="1">
    <source>
        <dbReference type="HAMAP-Rule" id="MF_01026"/>
    </source>
</evidence>
<evidence type="ECO:0000256" key="2">
    <source>
        <dbReference type="SAM" id="MobiDB-lite"/>
    </source>
</evidence>
<keyword id="KW-0004">4Fe-4S</keyword>
<keyword id="KW-0028">Amino-acid biosynthesis</keyword>
<keyword id="KW-0100">Branched-chain amino acid biosynthesis</keyword>
<keyword id="KW-0408">Iron</keyword>
<keyword id="KW-0411">Iron-sulfur</keyword>
<keyword id="KW-0432">Leucine biosynthesis</keyword>
<keyword id="KW-0456">Lyase</keyword>
<keyword id="KW-0479">Metal-binding</keyword>
<keyword id="KW-1185">Reference proteome</keyword>
<gene>
    <name evidence="1" type="primary">leuC</name>
    <name type="ordered locus">Hlac_0872</name>
</gene>
<protein>
    <recommendedName>
        <fullName evidence="1">3-isopropylmalate dehydratase large subunit</fullName>
        <ecNumber evidence="1">4.2.1.33</ecNumber>
    </recommendedName>
    <alternativeName>
        <fullName evidence="1">Alpha-IPM isomerase</fullName>
        <shortName evidence="1">IPMI</shortName>
    </alternativeName>
    <alternativeName>
        <fullName evidence="1">Isopropylmalate isomerase</fullName>
    </alternativeName>
</protein>
<organism>
    <name type="scientific">Halorubrum lacusprofundi (strain ATCC 49239 / DSM 5036 / JCM 8891 / ACAM 34)</name>
    <dbReference type="NCBI Taxonomy" id="416348"/>
    <lineage>
        <taxon>Archaea</taxon>
        <taxon>Methanobacteriati</taxon>
        <taxon>Methanobacteriota</taxon>
        <taxon>Stenosarchaea group</taxon>
        <taxon>Halobacteria</taxon>
        <taxon>Halobacteriales</taxon>
        <taxon>Haloferacaceae</taxon>
        <taxon>Halorubrum</taxon>
    </lineage>
</organism>
<feature type="chain" id="PRO_1000149365" description="3-isopropylmalate dehydratase large subunit">
    <location>
        <begin position="1"/>
        <end position="473"/>
    </location>
</feature>
<feature type="region of interest" description="Disordered" evidence="2">
    <location>
        <begin position="289"/>
        <end position="319"/>
    </location>
</feature>
<feature type="compositionally biased region" description="Polar residues" evidence="2">
    <location>
        <begin position="291"/>
        <end position="301"/>
    </location>
</feature>
<feature type="compositionally biased region" description="Acidic residues" evidence="2">
    <location>
        <begin position="307"/>
        <end position="317"/>
    </location>
</feature>
<feature type="binding site" evidence="1">
    <location>
        <position position="348"/>
    </location>
    <ligand>
        <name>[4Fe-4S] cluster</name>
        <dbReference type="ChEBI" id="CHEBI:49883"/>
    </ligand>
</feature>
<feature type="binding site" evidence="1">
    <location>
        <position position="408"/>
    </location>
    <ligand>
        <name>[4Fe-4S] cluster</name>
        <dbReference type="ChEBI" id="CHEBI:49883"/>
    </ligand>
</feature>
<feature type="binding site" evidence="1">
    <location>
        <position position="411"/>
    </location>
    <ligand>
        <name>[4Fe-4S] cluster</name>
        <dbReference type="ChEBI" id="CHEBI:49883"/>
    </ligand>
</feature>
<comment type="function">
    <text evidence="1">Catalyzes the isomerization between 2-isopropylmalate and 3-isopropylmalate, via the formation of 2-isopropylmaleate.</text>
</comment>
<comment type="catalytic activity">
    <reaction evidence="1">
        <text>(2R,3S)-3-isopropylmalate = (2S)-2-isopropylmalate</text>
        <dbReference type="Rhea" id="RHEA:32287"/>
        <dbReference type="ChEBI" id="CHEBI:1178"/>
        <dbReference type="ChEBI" id="CHEBI:35121"/>
        <dbReference type="EC" id="4.2.1.33"/>
    </reaction>
</comment>
<comment type="cofactor">
    <cofactor evidence="1">
        <name>[4Fe-4S] cluster</name>
        <dbReference type="ChEBI" id="CHEBI:49883"/>
    </cofactor>
    <text evidence="1">Binds 1 [4Fe-4S] cluster per subunit.</text>
</comment>
<comment type="pathway">
    <text evidence="1">Amino-acid biosynthesis; L-leucine biosynthesis; L-leucine from 3-methyl-2-oxobutanoate: step 2/4.</text>
</comment>
<comment type="subunit">
    <text evidence="1">Heterodimer of LeuC and LeuD.</text>
</comment>
<comment type="similarity">
    <text evidence="1">Belongs to the aconitase/IPM isomerase family. LeuC type 1 subfamily.</text>
</comment>
<name>LEUC_HALLT</name>
<proteinExistence type="inferred from homology"/>
<sequence length="473" mass="51198">MSEGTLYDKVWDRHTVTKLPTGQDQLFVGLHLVHEVTSPQAFGMLKERDQEVAFPERTHATVDHIVPTGNRDRPYRDEAAENMMAELEANVRGSGIDFSDPDSGNQGIVHVIGPEQGLTQPGMTIVCGDSHTSTHGAFGALAFGIGTSQIRDVLATGCIAMEKQQVRKIEVTGELGEGVTAKDVILTIIGKLGTDGGVGYVYEYAGEAIEDLGMEGRMSICNMSIEGGARAGYVNPDETTYEWLAETDAFADDPEKFERLKPYWESIRSDADAEYDDVVTIDGSAIEPTVTWGTTPGQTAGITEPIPDPDDLPEEDRDTAKRAQKHMRVEPGDTMEGYDIDVAFLGSCTNARLKDLREAAAFVEGREVDDDVRAMVVPGSQRVRDAAEAEGIDEIFIEAGFDWREPGCSMCLGMNDDQLVGDEASASSSNRNFVGRQGSKDGRTVLMSPIMVAAAAVTGEVTDVREMEEVATV</sequence>
<reference key="1">
    <citation type="journal article" date="2016" name="Stand. Genomic Sci.">
        <title>Complete genome sequence of the Antarctic Halorubrum lacusprofundi type strain ACAM 34.</title>
        <authorList>
            <person name="Anderson I.J."/>
            <person name="DasSarma P."/>
            <person name="Lucas S."/>
            <person name="Copeland A."/>
            <person name="Lapidus A."/>
            <person name="Del Rio T.G."/>
            <person name="Tice H."/>
            <person name="Dalin E."/>
            <person name="Bruce D.C."/>
            <person name="Goodwin L."/>
            <person name="Pitluck S."/>
            <person name="Sims D."/>
            <person name="Brettin T.S."/>
            <person name="Detter J.C."/>
            <person name="Han C.S."/>
            <person name="Larimer F."/>
            <person name="Hauser L."/>
            <person name="Land M."/>
            <person name="Ivanova N."/>
            <person name="Richardson P."/>
            <person name="Cavicchioli R."/>
            <person name="DasSarma S."/>
            <person name="Woese C.R."/>
            <person name="Kyrpides N.C."/>
        </authorList>
    </citation>
    <scope>NUCLEOTIDE SEQUENCE [LARGE SCALE GENOMIC DNA]</scope>
    <source>
        <strain>ATCC 49239 / DSM 5036 / JCM 8891 / ACAM 34</strain>
    </source>
</reference>
<accession>B9LUZ3</accession>
<dbReference type="EC" id="4.2.1.33" evidence="1"/>
<dbReference type="EMBL" id="CP001365">
    <property type="protein sequence ID" value="ACM56470.1"/>
    <property type="molecule type" value="Genomic_DNA"/>
</dbReference>
<dbReference type="RefSeq" id="WP_015909621.1">
    <property type="nucleotide sequence ID" value="NC_012029.1"/>
</dbReference>
<dbReference type="SMR" id="B9LUZ3"/>
<dbReference type="GeneID" id="7401242"/>
<dbReference type="KEGG" id="hla:Hlac_0872"/>
<dbReference type="eggNOG" id="arCOG01698">
    <property type="taxonomic scope" value="Archaea"/>
</dbReference>
<dbReference type="HOGENOM" id="CLU_006714_3_4_2"/>
<dbReference type="UniPathway" id="UPA00048">
    <property type="reaction ID" value="UER00071"/>
</dbReference>
<dbReference type="Proteomes" id="UP000000740">
    <property type="component" value="Chromosome 1"/>
</dbReference>
<dbReference type="GO" id="GO:0003861">
    <property type="term" value="F:3-isopropylmalate dehydratase activity"/>
    <property type="evidence" value="ECO:0007669"/>
    <property type="project" value="UniProtKB-UniRule"/>
</dbReference>
<dbReference type="GO" id="GO:0051539">
    <property type="term" value="F:4 iron, 4 sulfur cluster binding"/>
    <property type="evidence" value="ECO:0007669"/>
    <property type="project" value="UniProtKB-KW"/>
</dbReference>
<dbReference type="GO" id="GO:0046872">
    <property type="term" value="F:metal ion binding"/>
    <property type="evidence" value="ECO:0007669"/>
    <property type="project" value="UniProtKB-KW"/>
</dbReference>
<dbReference type="GO" id="GO:0009098">
    <property type="term" value="P:L-leucine biosynthetic process"/>
    <property type="evidence" value="ECO:0007669"/>
    <property type="project" value="UniProtKB-UniRule"/>
</dbReference>
<dbReference type="CDD" id="cd01583">
    <property type="entry name" value="IPMI"/>
    <property type="match status" value="1"/>
</dbReference>
<dbReference type="Gene3D" id="3.30.499.10">
    <property type="entry name" value="Aconitase, domain 3"/>
    <property type="match status" value="2"/>
</dbReference>
<dbReference type="HAMAP" id="MF_01026">
    <property type="entry name" value="LeuC_type1"/>
    <property type="match status" value="1"/>
</dbReference>
<dbReference type="InterPro" id="IPR004430">
    <property type="entry name" value="3-IsopropMal_deHydase_lsu"/>
</dbReference>
<dbReference type="InterPro" id="IPR015931">
    <property type="entry name" value="Acnase/IPM_dHydase_lsu_aba_1/3"/>
</dbReference>
<dbReference type="InterPro" id="IPR001030">
    <property type="entry name" value="Acoase/IPM_deHydtase_lsu_aba"/>
</dbReference>
<dbReference type="InterPro" id="IPR018136">
    <property type="entry name" value="Aconitase_4Fe-4S_BS"/>
</dbReference>
<dbReference type="InterPro" id="IPR036008">
    <property type="entry name" value="Aconitase_4Fe-4S_dom"/>
</dbReference>
<dbReference type="InterPro" id="IPR050067">
    <property type="entry name" value="IPM_dehydratase_rel_enz"/>
</dbReference>
<dbReference type="InterPro" id="IPR033941">
    <property type="entry name" value="IPMI_cat"/>
</dbReference>
<dbReference type="NCBIfam" id="TIGR00170">
    <property type="entry name" value="leuC"/>
    <property type="match status" value="1"/>
</dbReference>
<dbReference type="NCBIfam" id="NF004016">
    <property type="entry name" value="PRK05478.1"/>
    <property type="match status" value="1"/>
</dbReference>
<dbReference type="NCBIfam" id="NF009116">
    <property type="entry name" value="PRK12466.1"/>
    <property type="match status" value="1"/>
</dbReference>
<dbReference type="PANTHER" id="PTHR43822:SF9">
    <property type="entry name" value="3-ISOPROPYLMALATE DEHYDRATASE"/>
    <property type="match status" value="1"/>
</dbReference>
<dbReference type="PANTHER" id="PTHR43822">
    <property type="entry name" value="HOMOACONITASE, MITOCHONDRIAL-RELATED"/>
    <property type="match status" value="1"/>
</dbReference>
<dbReference type="Pfam" id="PF00330">
    <property type="entry name" value="Aconitase"/>
    <property type="match status" value="1"/>
</dbReference>
<dbReference type="PRINTS" id="PR00415">
    <property type="entry name" value="ACONITASE"/>
</dbReference>
<dbReference type="SUPFAM" id="SSF53732">
    <property type="entry name" value="Aconitase iron-sulfur domain"/>
    <property type="match status" value="1"/>
</dbReference>
<dbReference type="PROSITE" id="PS00450">
    <property type="entry name" value="ACONITASE_1"/>
    <property type="match status" value="1"/>
</dbReference>
<dbReference type="PROSITE" id="PS01244">
    <property type="entry name" value="ACONITASE_2"/>
    <property type="match status" value="1"/>
</dbReference>